<comment type="function">
    <text evidence="1">Catalyzes the formation of 4-diphosphocytidyl-2-C-methyl-D-erythritol from CTP and 2-C-methyl-D-erythritol 4-phosphate (MEP).</text>
</comment>
<comment type="catalytic activity">
    <reaction evidence="1">
        <text>2-C-methyl-D-erythritol 4-phosphate + CTP + H(+) = 4-CDP-2-C-methyl-D-erythritol + diphosphate</text>
        <dbReference type="Rhea" id="RHEA:13429"/>
        <dbReference type="ChEBI" id="CHEBI:15378"/>
        <dbReference type="ChEBI" id="CHEBI:33019"/>
        <dbReference type="ChEBI" id="CHEBI:37563"/>
        <dbReference type="ChEBI" id="CHEBI:57823"/>
        <dbReference type="ChEBI" id="CHEBI:58262"/>
        <dbReference type="EC" id="2.7.7.60"/>
    </reaction>
</comment>
<comment type="pathway">
    <text evidence="1">Isoprenoid biosynthesis; isopentenyl diphosphate biosynthesis via DXP pathway; isopentenyl diphosphate from 1-deoxy-D-xylulose 5-phosphate: step 2/6.</text>
</comment>
<comment type="similarity">
    <text evidence="1">Belongs to the IspD/TarI cytidylyltransferase family. IspD subfamily.</text>
</comment>
<keyword id="KW-0414">Isoprene biosynthesis</keyword>
<keyword id="KW-0548">Nucleotidyltransferase</keyword>
<keyword id="KW-0808">Transferase</keyword>
<name>ISPD_ACIBY</name>
<organism>
    <name type="scientific">Acinetobacter baumannii (strain AYE)</name>
    <dbReference type="NCBI Taxonomy" id="509173"/>
    <lineage>
        <taxon>Bacteria</taxon>
        <taxon>Pseudomonadati</taxon>
        <taxon>Pseudomonadota</taxon>
        <taxon>Gammaproteobacteria</taxon>
        <taxon>Moraxellales</taxon>
        <taxon>Moraxellaceae</taxon>
        <taxon>Acinetobacter</taxon>
        <taxon>Acinetobacter calcoaceticus/baumannii complex</taxon>
    </lineage>
</organism>
<protein>
    <recommendedName>
        <fullName evidence="1">2-C-methyl-D-erythritol 4-phosphate cytidylyltransferase</fullName>
        <ecNumber evidence="1">2.7.7.60</ecNumber>
    </recommendedName>
    <alternativeName>
        <fullName evidence="1">4-diphosphocytidyl-2C-methyl-D-erythritol synthase</fullName>
    </alternativeName>
    <alternativeName>
        <fullName evidence="1">MEP cytidylyltransferase</fullName>
        <shortName evidence="1">MCT</shortName>
    </alternativeName>
</protein>
<proteinExistence type="inferred from homology"/>
<sequence>MRHLHHQTSQTKLWAVIPAAGSGSRFSKTELKQYQYIQDATVIEHTVKRLSQLPLTGYVLAIGKQDTFASTLSFQDKHKAHFCNGGVERVHSVLNALNYLSQIADEDDWVLVHDAARPCVTFECLNTLVKNAIETNQSAILAIPVRDTLKQVNQEQQIDKTVSRELLWQAQTPQIAKIGILKKAIETALKNNLTITDEASALESIGESVQVVMGRSDNIKITYPDDLELARLILQSQN</sequence>
<dbReference type="EC" id="2.7.7.60" evidence="1"/>
<dbReference type="EMBL" id="CU459141">
    <property type="protein sequence ID" value="CAM86564.1"/>
    <property type="molecule type" value="Genomic_DNA"/>
</dbReference>
<dbReference type="RefSeq" id="WP_001216218.1">
    <property type="nucleotide sequence ID" value="NZ_JBDGFB010000010.1"/>
</dbReference>
<dbReference type="SMR" id="B0V5E6"/>
<dbReference type="EnsemblBacteria" id="CAM86564">
    <property type="protein sequence ID" value="CAM86564"/>
    <property type="gene ID" value="ABAYE1672"/>
</dbReference>
<dbReference type="GeneID" id="92894146"/>
<dbReference type="KEGG" id="aby:ABAYE1672"/>
<dbReference type="HOGENOM" id="CLU_061281_3_1_6"/>
<dbReference type="UniPathway" id="UPA00056">
    <property type="reaction ID" value="UER00093"/>
</dbReference>
<dbReference type="GO" id="GO:0050518">
    <property type="term" value="F:2-C-methyl-D-erythritol 4-phosphate cytidylyltransferase activity"/>
    <property type="evidence" value="ECO:0007669"/>
    <property type="project" value="UniProtKB-UniRule"/>
</dbReference>
<dbReference type="GO" id="GO:0019288">
    <property type="term" value="P:isopentenyl diphosphate biosynthetic process, methylerythritol 4-phosphate pathway"/>
    <property type="evidence" value="ECO:0007669"/>
    <property type="project" value="UniProtKB-UniRule"/>
</dbReference>
<dbReference type="CDD" id="cd02516">
    <property type="entry name" value="CDP-ME_synthetase"/>
    <property type="match status" value="1"/>
</dbReference>
<dbReference type="FunFam" id="3.90.550.10:FF:000003">
    <property type="entry name" value="2-C-methyl-D-erythritol 4-phosphate cytidylyltransferase"/>
    <property type="match status" value="1"/>
</dbReference>
<dbReference type="Gene3D" id="3.90.550.10">
    <property type="entry name" value="Spore Coat Polysaccharide Biosynthesis Protein SpsA, Chain A"/>
    <property type="match status" value="1"/>
</dbReference>
<dbReference type="HAMAP" id="MF_00108">
    <property type="entry name" value="IspD"/>
    <property type="match status" value="1"/>
</dbReference>
<dbReference type="InterPro" id="IPR001228">
    <property type="entry name" value="IspD"/>
</dbReference>
<dbReference type="InterPro" id="IPR034683">
    <property type="entry name" value="IspD/TarI"/>
</dbReference>
<dbReference type="InterPro" id="IPR050088">
    <property type="entry name" value="IspD/TarI_cytidylyltransf_bact"/>
</dbReference>
<dbReference type="InterPro" id="IPR018294">
    <property type="entry name" value="ISPD_synthase_CS"/>
</dbReference>
<dbReference type="InterPro" id="IPR029044">
    <property type="entry name" value="Nucleotide-diphossugar_trans"/>
</dbReference>
<dbReference type="NCBIfam" id="TIGR00453">
    <property type="entry name" value="ispD"/>
    <property type="match status" value="1"/>
</dbReference>
<dbReference type="PANTHER" id="PTHR32125">
    <property type="entry name" value="2-C-METHYL-D-ERYTHRITOL 4-PHOSPHATE CYTIDYLYLTRANSFERASE, CHLOROPLASTIC"/>
    <property type="match status" value="1"/>
</dbReference>
<dbReference type="PANTHER" id="PTHR32125:SF4">
    <property type="entry name" value="2-C-METHYL-D-ERYTHRITOL 4-PHOSPHATE CYTIDYLYLTRANSFERASE, CHLOROPLASTIC"/>
    <property type="match status" value="1"/>
</dbReference>
<dbReference type="Pfam" id="PF01128">
    <property type="entry name" value="IspD"/>
    <property type="match status" value="1"/>
</dbReference>
<dbReference type="SUPFAM" id="SSF53448">
    <property type="entry name" value="Nucleotide-diphospho-sugar transferases"/>
    <property type="match status" value="1"/>
</dbReference>
<dbReference type="PROSITE" id="PS01295">
    <property type="entry name" value="ISPD"/>
    <property type="match status" value="1"/>
</dbReference>
<feature type="chain" id="PRO_1000094304" description="2-C-methyl-D-erythritol 4-phosphate cytidylyltransferase">
    <location>
        <begin position="1"/>
        <end position="238"/>
    </location>
</feature>
<feature type="site" description="Transition state stabilizer" evidence="1">
    <location>
        <position position="25"/>
    </location>
</feature>
<feature type="site" description="Transition state stabilizer" evidence="1">
    <location>
        <position position="32"/>
    </location>
</feature>
<feature type="site" description="Positions MEP for the nucleophilic attack" evidence="1">
    <location>
        <position position="164"/>
    </location>
</feature>
<feature type="site" description="Positions MEP for the nucleophilic attack" evidence="1">
    <location>
        <position position="220"/>
    </location>
</feature>
<reference key="1">
    <citation type="journal article" date="2008" name="PLoS ONE">
        <title>Comparative analysis of Acinetobacters: three genomes for three lifestyles.</title>
        <authorList>
            <person name="Vallenet D."/>
            <person name="Nordmann P."/>
            <person name="Barbe V."/>
            <person name="Poirel L."/>
            <person name="Mangenot S."/>
            <person name="Bataille E."/>
            <person name="Dossat C."/>
            <person name="Gas S."/>
            <person name="Kreimeyer A."/>
            <person name="Lenoble P."/>
            <person name="Oztas S."/>
            <person name="Poulain J."/>
            <person name="Segurens B."/>
            <person name="Robert C."/>
            <person name="Abergel C."/>
            <person name="Claverie J.-M."/>
            <person name="Raoult D."/>
            <person name="Medigue C."/>
            <person name="Weissenbach J."/>
            <person name="Cruveiller S."/>
        </authorList>
    </citation>
    <scope>NUCLEOTIDE SEQUENCE [LARGE SCALE GENOMIC DNA]</scope>
    <source>
        <strain>AYE</strain>
    </source>
</reference>
<evidence type="ECO:0000255" key="1">
    <source>
        <dbReference type="HAMAP-Rule" id="MF_00108"/>
    </source>
</evidence>
<accession>B0V5E6</accession>
<gene>
    <name evidence="1" type="primary">ispD</name>
    <name type="ordered locus">ABAYE1672</name>
</gene>